<keyword id="KW-0217">Developmental protein</keyword>
<keyword id="KW-0256">Endoplasmic reticulum</keyword>
<keyword id="KW-0472">Membrane</keyword>
<keyword id="KW-0653">Protein transport</keyword>
<keyword id="KW-0811">Translocation</keyword>
<keyword id="KW-0812">Transmembrane</keyword>
<keyword id="KW-1133">Transmembrane helix</keyword>
<keyword id="KW-0813">Transport</keyword>
<protein>
    <recommendedName>
        <fullName>Protein transport protein Sec61 subunit alpha</fullName>
    </recommendedName>
</protein>
<organism>
    <name type="scientific">Notothenia angustata</name>
    <name type="common">Rockcod</name>
    <dbReference type="NCBI Taxonomy" id="8210"/>
    <lineage>
        <taxon>Eukaryota</taxon>
        <taxon>Metazoa</taxon>
        <taxon>Chordata</taxon>
        <taxon>Craniata</taxon>
        <taxon>Vertebrata</taxon>
        <taxon>Euteleostomi</taxon>
        <taxon>Actinopterygii</taxon>
        <taxon>Neopterygii</taxon>
        <taxon>Teleostei</taxon>
        <taxon>Neoteleostei</taxon>
        <taxon>Acanthomorphata</taxon>
        <taxon>Eupercaria</taxon>
        <taxon>Perciformes</taxon>
        <taxon>Notothenioidei</taxon>
        <taxon>Nototheniidae</taxon>
        <taxon>Notothenia</taxon>
    </lineage>
</organism>
<accession>Q8AY35</accession>
<comment type="function">
    <text evidence="3">Component of SEC61 channel-forming translocon complex that mediates transport of signal peptide-containing precursor polypeptides across the endoplasmic reticulum (ER). Forms a ribosome receptor and a gated pore in the ER membrane, both functions required for cotranslational translocation of nascent polypeptides. May cooperate with auxiliary protein SEC62, SEC63 and HSPA5/BiP to enable post-translational transport of small presecretory proteins. The SEC61 channel is also involved in ER membrane insertion of transmembrane proteins: it mediates membrane insertion of the first few transmembrane segments of proteins, while insertion of subsequent transmembrane regions of multi-pass membrane proteins is mediated by the multi-pass translocon (MPT) complex.</text>
</comment>
<comment type="subunit">
    <text evidence="2 3">The SEC61 channel-forming translocon complex consists of channel-forming core components SEC61A1, SEC61B and SEC61G and different auxiliary components such as SEC62 and SEC63 (By similarity). The SEC61 channel associates with the multi-pass translocon (MPT) complex (By similarity).</text>
</comment>
<comment type="subcellular location">
    <subcellularLocation>
        <location evidence="3">Endoplasmic reticulum membrane</location>
        <topology evidence="3">Multi-pass membrane protein</topology>
    </subcellularLocation>
</comment>
<comment type="similarity">
    <text evidence="5">Belongs to the SecY/SEC61-alpha family.</text>
</comment>
<name>SC61A_NOTAN</name>
<feature type="initiator methionine" description="Removed" evidence="1">
    <location>
        <position position="1"/>
    </location>
</feature>
<feature type="chain" id="PRO_0000131805" description="Protein transport protein Sec61 subunit alpha">
    <location>
        <begin position="2"/>
        <end position="476"/>
    </location>
</feature>
<feature type="topological domain" description="Cytoplasmic" evidence="4">
    <location>
        <begin position="2"/>
        <end position="33"/>
    </location>
</feature>
<feature type="transmembrane region" description="Helical" evidence="4">
    <location>
        <begin position="34"/>
        <end position="53"/>
    </location>
</feature>
<feature type="topological domain" description="Lumenal" evidence="4">
    <location>
        <begin position="54"/>
        <end position="76"/>
    </location>
</feature>
<feature type="transmembrane region" description="Helical" evidence="4">
    <location>
        <begin position="77"/>
        <end position="96"/>
    </location>
</feature>
<feature type="topological domain" description="Cytoplasmic" evidence="4">
    <location>
        <begin position="97"/>
        <end position="117"/>
    </location>
</feature>
<feature type="transmembrane region" description="Helical" evidence="4">
    <location>
        <begin position="118"/>
        <end position="138"/>
    </location>
</feature>
<feature type="topological domain" description="Lumenal" evidence="4">
    <location>
        <begin position="139"/>
        <end position="144"/>
    </location>
</feature>
<feature type="transmembrane region" description="Helical" evidence="4">
    <location>
        <begin position="145"/>
        <end position="165"/>
    </location>
</feature>
<feature type="topological domain" description="Cytoplasmic" evidence="4">
    <location>
        <begin position="166"/>
        <end position="172"/>
    </location>
</feature>
<feature type="transmembrane region" description="Helical" evidence="4">
    <location>
        <begin position="173"/>
        <end position="193"/>
    </location>
</feature>
<feature type="topological domain" description="Lumenal" evidence="4">
    <location>
        <begin position="194"/>
        <end position="240"/>
    </location>
</feature>
<feature type="transmembrane region" description="Helical" evidence="4">
    <location>
        <begin position="241"/>
        <end position="261"/>
    </location>
</feature>
<feature type="topological domain" description="Cytoplasmic" evidence="4">
    <location>
        <begin position="262"/>
        <end position="288"/>
    </location>
</feature>
<feature type="transmembrane region" description="Helical" evidence="4">
    <location>
        <begin position="289"/>
        <end position="309"/>
    </location>
</feature>
<feature type="topological domain" description="Lumenal" evidence="4">
    <location>
        <begin position="310"/>
        <end position="354"/>
    </location>
</feature>
<feature type="transmembrane region" description="Helical" evidence="4">
    <location>
        <begin position="355"/>
        <end position="375"/>
    </location>
</feature>
<feature type="topological domain" description="Cytoplasmic" evidence="4">
    <location>
        <begin position="376"/>
        <end position="420"/>
    </location>
</feature>
<feature type="transmembrane region" description="Helical" evidence="4">
    <location>
        <begin position="421"/>
        <end position="441"/>
    </location>
</feature>
<feature type="topological domain" description="Lumenal" evidence="4">
    <location>
        <begin position="442"/>
        <end position="445"/>
    </location>
</feature>
<feature type="transmembrane region" description="Helical" evidence="4">
    <location>
        <begin position="446"/>
        <end position="462"/>
    </location>
</feature>
<feature type="topological domain" description="Cytoplasmic" evidence="4">
    <location>
        <begin position="463"/>
        <end position="476"/>
    </location>
</feature>
<evidence type="ECO:0000250" key="1"/>
<evidence type="ECO:0000250" key="2">
    <source>
        <dbReference type="UniProtKB" id="P38377"/>
    </source>
</evidence>
<evidence type="ECO:0000250" key="3">
    <source>
        <dbReference type="UniProtKB" id="P61619"/>
    </source>
</evidence>
<evidence type="ECO:0000255" key="4"/>
<evidence type="ECO:0000305" key="5"/>
<dbReference type="EMBL" id="AY103472">
    <property type="protein sequence ID" value="AAM52488.1"/>
    <property type="molecule type" value="mRNA"/>
</dbReference>
<dbReference type="SMR" id="Q8AY35"/>
<dbReference type="GO" id="GO:0005789">
    <property type="term" value="C:endoplasmic reticulum membrane"/>
    <property type="evidence" value="ECO:0000250"/>
    <property type="project" value="UniProtKB"/>
</dbReference>
<dbReference type="GO" id="GO:0039019">
    <property type="term" value="P:pronephric nephron development"/>
    <property type="evidence" value="ECO:0000250"/>
    <property type="project" value="UniProtKB"/>
</dbReference>
<dbReference type="GO" id="GO:0045047">
    <property type="term" value="P:protein targeting to ER"/>
    <property type="evidence" value="ECO:0000250"/>
    <property type="project" value="UniProtKB"/>
</dbReference>
<dbReference type="GO" id="GO:0015031">
    <property type="term" value="P:protein transport"/>
    <property type="evidence" value="ECO:0007669"/>
    <property type="project" value="UniProtKB-KW"/>
</dbReference>
<dbReference type="FunFam" id="1.10.3370.10:FF:000002">
    <property type="entry name" value="Transport Sec61 subunit alpha isoform 2"/>
    <property type="match status" value="1"/>
</dbReference>
<dbReference type="Gene3D" id="1.10.3370.10">
    <property type="entry name" value="SecY subunit domain"/>
    <property type="match status" value="1"/>
</dbReference>
<dbReference type="InterPro" id="IPR002208">
    <property type="entry name" value="SecY/SEC61-alpha"/>
</dbReference>
<dbReference type="InterPro" id="IPR030659">
    <property type="entry name" value="SecY_CS"/>
</dbReference>
<dbReference type="InterPro" id="IPR023201">
    <property type="entry name" value="SecY_dom_sf"/>
</dbReference>
<dbReference type="InterPro" id="IPR019561">
    <property type="entry name" value="Translocon_Sec61/SecY_plug_dom"/>
</dbReference>
<dbReference type="NCBIfam" id="TIGR00967">
    <property type="entry name" value="3a0501s007"/>
    <property type="match status" value="1"/>
</dbReference>
<dbReference type="NCBIfam" id="NF006341">
    <property type="entry name" value="PRK08568.1-5"/>
    <property type="match status" value="1"/>
</dbReference>
<dbReference type="PANTHER" id="PTHR10906">
    <property type="entry name" value="SECY/SEC61-ALPHA FAMILY MEMBER"/>
    <property type="match status" value="1"/>
</dbReference>
<dbReference type="Pfam" id="PF10559">
    <property type="entry name" value="Plug_translocon"/>
    <property type="match status" value="1"/>
</dbReference>
<dbReference type="Pfam" id="PF00344">
    <property type="entry name" value="SecY"/>
    <property type="match status" value="1"/>
</dbReference>
<dbReference type="PIRSF" id="PIRSF004557">
    <property type="entry name" value="SecY"/>
    <property type="match status" value="1"/>
</dbReference>
<dbReference type="SUPFAM" id="SSF103491">
    <property type="entry name" value="Preprotein translocase SecY subunit"/>
    <property type="match status" value="1"/>
</dbReference>
<dbReference type="PROSITE" id="PS00755">
    <property type="entry name" value="SECY_1"/>
    <property type="match status" value="1"/>
</dbReference>
<dbReference type="PROSITE" id="PS00756">
    <property type="entry name" value="SECY_2"/>
    <property type="match status" value="1"/>
</dbReference>
<proteinExistence type="evidence at transcript level"/>
<reference key="1">
    <citation type="journal article" date="2003" name="J. Cell Sci.">
        <title>Protein translocation across the endoplasmic reticulum membrane in cold-adapted organisms.</title>
        <authorList>
            <person name="Romisch K."/>
            <person name="Collie N."/>
            <person name="Soto N."/>
            <person name="Logue J."/>
            <person name="Lindsay M."/>
            <person name="Scheper W."/>
            <person name="Cheng C.-H.C."/>
        </authorList>
    </citation>
    <scope>NUCLEOTIDE SEQUENCE [MRNA]</scope>
    <source>
        <tissue>Liver</tissue>
    </source>
</reference>
<sequence length="476" mass="52316">MGIKFLEFIKPFCAVLPEIQKPERKIQFREKVLWTAITLFIFLVCCQIPLFGIMSSDSADPFYWMRVILASNRGTLMELGISPIVTSGLIMQLLAGAKIIEVGDTPKDRALFNGAQKLFGMIITIGQAIVYVMTGMYGDPSEMGAGICLLIIIQLFVAGLIVLLLDELLQKGYGLGSGISLFIATNICETIVWKAFSPTTVNTGRGTEFEGAIIALFHLLATRTDKVRALREAFYRQNLPNILNLIATVFVFAVVIYFQGFRVDLPIKSARYRGQYNTYPIKLFYTSNIPIILQSALVSNLYVISQMLSTRFSGNFLVNLLGTWSDATSGGPARAYPVAGLCYYLSPPESFGSVLDDPVHAAIYIVFMLGSCAFFSKTWIEVSGSSAKDVAKQLKEQQMVMRGHRETSMVHELNRYIPTAAAFGGLCIGGLSVMADFLGAIGSGTGILLAVTIIYQYFEIFVKEQSEMGSMGALLF</sequence>
<gene>
    <name type="primary">sec61a</name>
</gene>